<keyword id="KW-0249">Electron transport</keyword>
<keyword id="KW-0472">Membrane</keyword>
<keyword id="KW-0496">Mitochondrion</keyword>
<keyword id="KW-0999">Mitochondrion inner membrane</keyword>
<keyword id="KW-0520">NAD</keyword>
<keyword id="KW-1185">Reference proteome</keyword>
<keyword id="KW-0679">Respiratory chain</keyword>
<keyword id="KW-1278">Translocase</keyword>
<keyword id="KW-0812">Transmembrane</keyword>
<keyword id="KW-1133">Transmembrane helix</keyword>
<keyword id="KW-0813">Transport</keyword>
<keyword id="KW-0830">Ubiquinone</keyword>
<reference key="1">
    <citation type="submission" date="2005-08" db="EMBL/GenBank/DDBJ databases">
        <title>Annotation of mitochondrial genome of Ustilago maydis and comparative analysis of basidiomycete mtDNAs.</title>
        <authorList>
            <person name="Kennell J.C."/>
            <person name="Boehmer C."/>
        </authorList>
    </citation>
    <scope>NUCLEOTIDE SEQUENCE [LARGE SCALE GENOMIC DNA]</scope>
    <source>
        <strain>DSM 14603 / FGSC 9021 / UM521</strain>
    </source>
</reference>
<reference key="2">
    <citation type="journal article" date="2006" name="Nature">
        <title>Insights from the genome of the biotrophic fungal plant pathogen Ustilago maydis.</title>
        <authorList>
            <person name="Kaemper J."/>
            <person name="Kahmann R."/>
            <person name="Boelker M."/>
            <person name="Ma L.-J."/>
            <person name="Brefort T."/>
            <person name="Saville B.J."/>
            <person name="Banuett F."/>
            <person name="Kronstad J.W."/>
            <person name="Gold S.E."/>
            <person name="Mueller O."/>
            <person name="Perlin M.H."/>
            <person name="Woesten H.A.B."/>
            <person name="de Vries R."/>
            <person name="Ruiz-Herrera J."/>
            <person name="Reynaga-Pena C.G."/>
            <person name="Snetselaar K."/>
            <person name="McCann M."/>
            <person name="Perez-Martin J."/>
            <person name="Feldbruegge M."/>
            <person name="Basse C.W."/>
            <person name="Steinberg G."/>
            <person name="Ibeas J.I."/>
            <person name="Holloman W."/>
            <person name="Guzman P."/>
            <person name="Farman M.L."/>
            <person name="Stajich J.E."/>
            <person name="Sentandreu R."/>
            <person name="Gonzalez-Prieto J.M."/>
            <person name="Kennell J.C."/>
            <person name="Molina L."/>
            <person name="Schirawski J."/>
            <person name="Mendoza-Mendoza A."/>
            <person name="Greilinger D."/>
            <person name="Muench K."/>
            <person name="Roessel N."/>
            <person name="Scherer M."/>
            <person name="Vranes M."/>
            <person name="Ladendorf O."/>
            <person name="Vincon V."/>
            <person name="Fuchs U."/>
            <person name="Sandrock B."/>
            <person name="Meng S."/>
            <person name="Ho E.C.H."/>
            <person name="Cahill M.J."/>
            <person name="Boyce K.J."/>
            <person name="Klose J."/>
            <person name="Klosterman S.J."/>
            <person name="Deelstra H.J."/>
            <person name="Ortiz-Castellanos L."/>
            <person name="Li W."/>
            <person name="Sanchez-Alonso P."/>
            <person name="Schreier P.H."/>
            <person name="Haeuser-Hahn I."/>
            <person name="Vaupel M."/>
            <person name="Koopmann E."/>
            <person name="Friedrich G."/>
            <person name="Voss H."/>
            <person name="Schlueter T."/>
            <person name="Margolis J."/>
            <person name="Platt D."/>
            <person name="Swimmer C."/>
            <person name="Gnirke A."/>
            <person name="Chen F."/>
            <person name="Vysotskaia V."/>
            <person name="Mannhaupt G."/>
            <person name="Gueldener U."/>
            <person name="Muensterkoetter M."/>
            <person name="Haase D."/>
            <person name="Oesterheld M."/>
            <person name="Mewes H.-W."/>
            <person name="Mauceli E.W."/>
            <person name="DeCaprio D."/>
            <person name="Wade C.M."/>
            <person name="Butler J."/>
            <person name="Young S.K."/>
            <person name="Jaffe D.B."/>
            <person name="Calvo S.E."/>
            <person name="Nusbaum C."/>
            <person name="Galagan J.E."/>
            <person name="Birren B.W."/>
        </authorList>
    </citation>
    <scope>NUCLEOTIDE SEQUENCE [LARGE SCALE GENOMIC DNA]</scope>
    <source>
        <strain>DSM 14603 / FGSC 9021 / UM521</strain>
    </source>
</reference>
<accession>Q0H8X1</accession>
<feature type="chain" id="PRO_0000271151" description="NADH-ubiquinone oxidoreductase chain 4L">
    <location>
        <begin position="1"/>
        <end position="93"/>
    </location>
</feature>
<feature type="transmembrane region" description="Helical" evidence="2">
    <location>
        <begin position="2"/>
        <end position="22"/>
    </location>
</feature>
<feature type="transmembrane region" description="Helical" evidence="2">
    <location>
        <begin position="27"/>
        <end position="47"/>
    </location>
</feature>
<feature type="transmembrane region" description="Helical" evidence="2">
    <location>
        <begin position="62"/>
        <end position="82"/>
    </location>
</feature>
<dbReference type="EC" id="7.1.1.2"/>
<dbReference type="EMBL" id="DQ157700">
    <property type="protein sequence ID" value="AAZ67016.1"/>
    <property type="molecule type" value="Genomic_DNA"/>
</dbReference>
<dbReference type="EMBL" id="AACP01000277">
    <property type="status" value="NOT_ANNOTATED_CDS"/>
    <property type="molecule type" value="Genomic_DNA"/>
</dbReference>
<dbReference type="RefSeq" id="YP_762701.1">
    <property type="nucleotide sequence ID" value="NC_008368.1"/>
</dbReference>
<dbReference type="SMR" id="Q0H8X1"/>
<dbReference type="STRING" id="237631.Q0H8X1"/>
<dbReference type="GeneID" id="4308281"/>
<dbReference type="InParanoid" id="Q0H8X1"/>
<dbReference type="Proteomes" id="UP000000561">
    <property type="component" value="Mitochondrion"/>
</dbReference>
<dbReference type="GO" id="GO:0005743">
    <property type="term" value="C:mitochondrial inner membrane"/>
    <property type="evidence" value="ECO:0007669"/>
    <property type="project" value="UniProtKB-SubCell"/>
</dbReference>
<dbReference type="GO" id="GO:0045271">
    <property type="term" value="C:respiratory chain complex I"/>
    <property type="evidence" value="ECO:0000318"/>
    <property type="project" value="GO_Central"/>
</dbReference>
<dbReference type="GO" id="GO:0008137">
    <property type="term" value="F:NADH dehydrogenase (ubiquinone) activity"/>
    <property type="evidence" value="ECO:0007669"/>
    <property type="project" value="UniProtKB-EC"/>
</dbReference>
<dbReference type="GO" id="GO:0042773">
    <property type="term" value="P:ATP synthesis coupled electron transport"/>
    <property type="evidence" value="ECO:0007669"/>
    <property type="project" value="InterPro"/>
</dbReference>
<dbReference type="FunFam" id="1.10.287.3510:FF:000004">
    <property type="entry name" value="NADH-ubiquinone oxidoreductase chain 4L"/>
    <property type="match status" value="1"/>
</dbReference>
<dbReference type="Gene3D" id="1.10.287.3510">
    <property type="match status" value="1"/>
</dbReference>
<dbReference type="HAMAP" id="MF_01456">
    <property type="entry name" value="NDH1_NuoK"/>
    <property type="match status" value="1"/>
</dbReference>
<dbReference type="InterPro" id="IPR001133">
    <property type="entry name" value="NADH_UbQ_OxRdtase_chain4L/K"/>
</dbReference>
<dbReference type="InterPro" id="IPR039428">
    <property type="entry name" value="NUOK/Mnh_C1-like"/>
</dbReference>
<dbReference type="NCBIfam" id="NF004320">
    <property type="entry name" value="PRK05715.1-2"/>
    <property type="match status" value="1"/>
</dbReference>
<dbReference type="PANTHER" id="PTHR11434:SF16">
    <property type="entry name" value="NADH-UBIQUINONE OXIDOREDUCTASE CHAIN 4L"/>
    <property type="match status" value="1"/>
</dbReference>
<dbReference type="PANTHER" id="PTHR11434">
    <property type="entry name" value="NADH-UBIQUINONE OXIDOREDUCTASE SUBUNIT ND4L"/>
    <property type="match status" value="1"/>
</dbReference>
<dbReference type="Pfam" id="PF00420">
    <property type="entry name" value="Oxidored_q2"/>
    <property type="match status" value="1"/>
</dbReference>
<name>NU4LM_MYCMD</name>
<evidence type="ECO:0000250" key="1"/>
<evidence type="ECO:0000255" key="2"/>
<evidence type="ECO:0000305" key="3"/>
<geneLocation type="mitochondrion"/>
<organism>
    <name type="scientific">Mycosarcoma maydis</name>
    <name type="common">Corn smut fungus</name>
    <name type="synonym">Ustilago maydis</name>
    <dbReference type="NCBI Taxonomy" id="5270"/>
    <lineage>
        <taxon>Eukaryota</taxon>
        <taxon>Fungi</taxon>
        <taxon>Dikarya</taxon>
        <taxon>Basidiomycota</taxon>
        <taxon>Ustilaginomycotina</taxon>
        <taxon>Ustilaginomycetes</taxon>
        <taxon>Ustilaginales</taxon>
        <taxon>Ustilaginaceae</taxon>
        <taxon>Mycosarcoma</taxon>
    </lineage>
</organism>
<comment type="function">
    <text evidence="1">Core subunit of the mitochondrial membrane respiratory chain NADH dehydrogenase (Complex I) that is believed to belong to the minimal assembly required for catalysis. Complex I functions in the transfer of electrons from NADH to the respiratory chain. The immediate electron acceptor for the enzyme is believed to be ubiquinone (By similarity).</text>
</comment>
<comment type="catalytic activity">
    <reaction>
        <text>a ubiquinone + NADH + 5 H(+)(in) = a ubiquinol + NAD(+) + 4 H(+)(out)</text>
        <dbReference type="Rhea" id="RHEA:29091"/>
        <dbReference type="Rhea" id="RHEA-COMP:9565"/>
        <dbReference type="Rhea" id="RHEA-COMP:9566"/>
        <dbReference type="ChEBI" id="CHEBI:15378"/>
        <dbReference type="ChEBI" id="CHEBI:16389"/>
        <dbReference type="ChEBI" id="CHEBI:17976"/>
        <dbReference type="ChEBI" id="CHEBI:57540"/>
        <dbReference type="ChEBI" id="CHEBI:57945"/>
        <dbReference type="EC" id="7.1.1.2"/>
    </reaction>
</comment>
<comment type="subcellular location">
    <subcellularLocation>
        <location evidence="3">Mitochondrion inner membrane</location>
        <topology evidence="3">Multi-pass membrane protein</topology>
    </subcellularLocation>
</comment>
<comment type="similarity">
    <text evidence="3">Belongs to the complex I subunit 4L family.</text>
</comment>
<sequence>MALYEMNLSVILFLIGILGFVLNRKNIILMLISIEVMLLAVTLLVLVSSYSFDDILGQTYSIYIIAIAGAESAIGLGILVAYYRLRGNISLRQ</sequence>
<proteinExistence type="inferred from homology"/>
<gene>
    <name type="primary">ND4L</name>
    <name type="synonym">NAD4L</name>
</gene>
<protein>
    <recommendedName>
        <fullName>NADH-ubiquinone oxidoreductase chain 4L</fullName>
        <ecNumber>7.1.1.2</ecNumber>
    </recommendedName>
    <alternativeName>
        <fullName>NADH dehydrogenase subunit 4L</fullName>
    </alternativeName>
</protein>